<evidence type="ECO:0000255" key="1">
    <source>
        <dbReference type="HAMAP-Rule" id="MF_00023"/>
    </source>
</evidence>
<dbReference type="EMBL" id="CU458896">
    <property type="protein sequence ID" value="CAM63549.1"/>
    <property type="molecule type" value="Genomic_DNA"/>
</dbReference>
<dbReference type="RefSeq" id="WP_005056461.1">
    <property type="nucleotide sequence ID" value="NZ_MLCG01000001.1"/>
</dbReference>
<dbReference type="SMR" id="B1MEU3"/>
<dbReference type="GeneID" id="93380412"/>
<dbReference type="KEGG" id="mab:MAB_3473c"/>
<dbReference type="Proteomes" id="UP000007137">
    <property type="component" value="Chromosome"/>
</dbReference>
<dbReference type="GO" id="GO:0005829">
    <property type="term" value="C:cytosol"/>
    <property type="evidence" value="ECO:0007669"/>
    <property type="project" value="TreeGrafter"/>
</dbReference>
<dbReference type="GO" id="GO:0003723">
    <property type="term" value="F:RNA binding"/>
    <property type="evidence" value="ECO:0007669"/>
    <property type="project" value="UniProtKB-UniRule"/>
</dbReference>
<dbReference type="GO" id="GO:0070929">
    <property type="term" value="P:trans-translation"/>
    <property type="evidence" value="ECO:0007669"/>
    <property type="project" value="UniProtKB-UniRule"/>
</dbReference>
<dbReference type="CDD" id="cd09294">
    <property type="entry name" value="SmpB"/>
    <property type="match status" value="1"/>
</dbReference>
<dbReference type="Gene3D" id="2.40.280.10">
    <property type="match status" value="1"/>
</dbReference>
<dbReference type="HAMAP" id="MF_00023">
    <property type="entry name" value="SmpB"/>
    <property type="match status" value="1"/>
</dbReference>
<dbReference type="InterPro" id="IPR023620">
    <property type="entry name" value="SmpB"/>
</dbReference>
<dbReference type="InterPro" id="IPR000037">
    <property type="entry name" value="SsrA-bd_prot"/>
</dbReference>
<dbReference type="NCBIfam" id="NF003843">
    <property type="entry name" value="PRK05422.1"/>
    <property type="match status" value="1"/>
</dbReference>
<dbReference type="NCBIfam" id="TIGR00086">
    <property type="entry name" value="smpB"/>
    <property type="match status" value="1"/>
</dbReference>
<dbReference type="PANTHER" id="PTHR30308:SF2">
    <property type="entry name" value="SSRA-BINDING PROTEIN"/>
    <property type="match status" value="1"/>
</dbReference>
<dbReference type="PANTHER" id="PTHR30308">
    <property type="entry name" value="TMRNA-BINDING COMPONENT OF TRANS-TRANSLATION TAGGING COMPLEX"/>
    <property type="match status" value="1"/>
</dbReference>
<dbReference type="Pfam" id="PF01668">
    <property type="entry name" value="SmpB"/>
    <property type="match status" value="1"/>
</dbReference>
<dbReference type="SUPFAM" id="SSF74982">
    <property type="entry name" value="Small protein B (SmpB)"/>
    <property type="match status" value="1"/>
</dbReference>
<reference key="1">
    <citation type="journal article" date="2009" name="PLoS ONE">
        <title>Non mycobacterial virulence genes in the genome of the emerging pathogen Mycobacterium abscessus.</title>
        <authorList>
            <person name="Ripoll F."/>
            <person name="Pasek S."/>
            <person name="Schenowitz C."/>
            <person name="Dossat C."/>
            <person name="Barbe V."/>
            <person name="Rottman M."/>
            <person name="Macheras E."/>
            <person name="Heym B."/>
            <person name="Herrmann J.L."/>
            <person name="Daffe M."/>
            <person name="Brosch R."/>
            <person name="Risler J.L."/>
            <person name="Gaillard J.L."/>
        </authorList>
    </citation>
    <scope>NUCLEOTIDE SEQUENCE [LARGE SCALE GENOMIC DNA]</scope>
    <source>
        <strain>ATCC 19977 / DSM 44196 / CCUG 20993 / CIP 104536 / JCM 13569 / NCTC 13031 / TMC 1543 / L948</strain>
    </source>
</reference>
<accession>B1MEU3</accession>
<keyword id="KW-0963">Cytoplasm</keyword>
<keyword id="KW-1185">Reference proteome</keyword>
<keyword id="KW-0694">RNA-binding</keyword>
<feature type="chain" id="PRO_1000090166" description="SsrA-binding protein">
    <location>
        <begin position="1"/>
        <end position="159"/>
    </location>
</feature>
<name>SSRP_MYCA9</name>
<comment type="function">
    <text evidence="1">Required for rescue of stalled ribosomes mediated by trans-translation. Binds to transfer-messenger RNA (tmRNA), required for stable association of tmRNA with ribosomes. tmRNA and SmpB together mimic tRNA shape, replacing the anticodon stem-loop with SmpB. tmRNA is encoded by the ssrA gene; the 2 termini fold to resemble tRNA(Ala) and it encodes a 'tag peptide', a short internal open reading frame. During trans-translation Ala-aminoacylated tmRNA acts like a tRNA, entering the A-site of stalled ribosomes, displacing the stalled mRNA. The ribosome then switches to translate the ORF on the tmRNA; the nascent peptide is terminated with the 'tag peptide' encoded by the tmRNA and targeted for degradation. The ribosome is freed to recommence translation, which seems to be the essential function of trans-translation.</text>
</comment>
<comment type="subcellular location">
    <subcellularLocation>
        <location evidence="1">Cytoplasm</location>
    </subcellularLocation>
    <text evidence="1">The tmRNA-SmpB complex associates with stalled 70S ribosomes.</text>
</comment>
<comment type="similarity">
    <text evidence="1">Belongs to the SmpB family.</text>
</comment>
<gene>
    <name evidence="1" type="primary">smpB</name>
    <name type="ordered locus">MAB_3473c</name>
</gene>
<sequence>MSKKPADGRKVIATNRKARHNYSIIDVYEAGVQLVGTEVKTLREGKASLVDAFATVDDGEVWLRGVHIPQYDHGTWTNHAPLRNRKLLLHRAQIDMLVGKTRDGNLTLVPLSLYFLDGKVKVELALARGKQAHDKRQDIAKRDASREITRELGRRAKGM</sequence>
<proteinExistence type="inferred from homology"/>
<organism>
    <name type="scientific">Mycobacteroides abscessus (strain ATCC 19977 / DSM 44196 / CCUG 20993 / CIP 104536 / JCM 13569 / NCTC 13031 / TMC 1543 / L948)</name>
    <name type="common">Mycobacterium abscessus</name>
    <dbReference type="NCBI Taxonomy" id="561007"/>
    <lineage>
        <taxon>Bacteria</taxon>
        <taxon>Bacillati</taxon>
        <taxon>Actinomycetota</taxon>
        <taxon>Actinomycetes</taxon>
        <taxon>Mycobacteriales</taxon>
        <taxon>Mycobacteriaceae</taxon>
        <taxon>Mycobacteroides</taxon>
        <taxon>Mycobacteroides abscessus</taxon>
    </lineage>
</organism>
<protein>
    <recommendedName>
        <fullName evidence="1">SsrA-binding protein</fullName>
    </recommendedName>
    <alternativeName>
        <fullName evidence="1">Small protein B</fullName>
    </alternativeName>
</protein>